<name>CYSKM_ARATH</name>
<reference key="1">
    <citation type="journal article" date="1999" name="Amino Acids">
        <title>Molecular cloning and expression analyses of mitochondrial and plastidic isoforms of cysteine synthase (O-acetylserine(thiol)lyase) from Arabidopsis thaliana.</title>
        <authorList>
            <person name="Hesse H."/>
            <person name="Lipke J."/>
            <person name="Altmann T."/>
            <person name="Hofgen R."/>
        </authorList>
    </citation>
    <scope>NUCLEOTIDE SEQUENCE [MRNA]</scope>
    <source>
        <strain>cv. Columbia</strain>
        <tissue>Flower</tissue>
    </source>
</reference>
<reference key="2">
    <citation type="journal article" date="2000" name="Nature">
        <title>Sequence and analysis of chromosome 3 of the plant Arabidopsis thaliana.</title>
        <authorList>
            <person name="Salanoubat M."/>
            <person name="Lemcke K."/>
            <person name="Rieger M."/>
            <person name="Ansorge W."/>
            <person name="Unseld M."/>
            <person name="Fartmann B."/>
            <person name="Valle G."/>
            <person name="Bloecker H."/>
            <person name="Perez-Alonso M."/>
            <person name="Obermaier B."/>
            <person name="Delseny M."/>
            <person name="Boutry M."/>
            <person name="Grivell L.A."/>
            <person name="Mache R."/>
            <person name="Puigdomenech P."/>
            <person name="De Simone V."/>
            <person name="Choisne N."/>
            <person name="Artiguenave F."/>
            <person name="Robert C."/>
            <person name="Brottier P."/>
            <person name="Wincker P."/>
            <person name="Cattolico L."/>
            <person name="Weissenbach J."/>
            <person name="Saurin W."/>
            <person name="Quetier F."/>
            <person name="Schaefer M."/>
            <person name="Mueller-Auer S."/>
            <person name="Gabel C."/>
            <person name="Fuchs M."/>
            <person name="Benes V."/>
            <person name="Wurmbach E."/>
            <person name="Drzonek H."/>
            <person name="Erfle H."/>
            <person name="Jordan N."/>
            <person name="Bangert S."/>
            <person name="Wiedelmann R."/>
            <person name="Kranz H."/>
            <person name="Voss H."/>
            <person name="Holland R."/>
            <person name="Brandt P."/>
            <person name="Nyakatura G."/>
            <person name="Vezzi A."/>
            <person name="D'Angelo M."/>
            <person name="Pallavicini A."/>
            <person name="Toppo S."/>
            <person name="Simionati B."/>
            <person name="Conrad A."/>
            <person name="Hornischer K."/>
            <person name="Kauer G."/>
            <person name="Loehnert T.-H."/>
            <person name="Nordsiek G."/>
            <person name="Reichelt J."/>
            <person name="Scharfe M."/>
            <person name="Schoen O."/>
            <person name="Bargues M."/>
            <person name="Terol J."/>
            <person name="Climent J."/>
            <person name="Navarro P."/>
            <person name="Collado C."/>
            <person name="Perez-Perez A."/>
            <person name="Ottenwaelder B."/>
            <person name="Duchemin D."/>
            <person name="Cooke R."/>
            <person name="Laudie M."/>
            <person name="Berger-Llauro C."/>
            <person name="Purnelle B."/>
            <person name="Masuy D."/>
            <person name="de Haan M."/>
            <person name="Maarse A.C."/>
            <person name="Alcaraz J.-P."/>
            <person name="Cottet A."/>
            <person name="Casacuberta E."/>
            <person name="Monfort A."/>
            <person name="Argiriou A."/>
            <person name="Flores M."/>
            <person name="Liguori R."/>
            <person name="Vitale D."/>
            <person name="Mannhaupt G."/>
            <person name="Haase D."/>
            <person name="Schoof H."/>
            <person name="Rudd S."/>
            <person name="Zaccaria P."/>
            <person name="Mewes H.-W."/>
            <person name="Mayer K.F.X."/>
            <person name="Kaul S."/>
            <person name="Town C.D."/>
            <person name="Koo H.L."/>
            <person name="Tallon L.J."/>
            <person name="Jenkins J."/>
            <person name="Rooney T."/>
            <person name="Rizzo M."/>
            <person name="Walts A."/>
            <person name="Utterback T."/>
            <person name="Fujii C.Y."/>
            <person name="Shea T.P."/>
            <person name="Creasy T.H."/>
            <person name="Haas B."/>
            <person name="Maiti R."/>
            <person name="Wu D."/>
            <person name="Peterson J."/>
            <person name="Van Aken S."/>
            <person name="Pai G."/>
            <person name="Militscher J."/>
            <person name="Sellers P."/>
            <person name="Gill J.E."/>
            <person name="Feldblyum T.V."/>
            <person name="Preuss D."/>
            <person name="Lin X."/>
            <person name="Nierman W.C."/>
            <person name="Salzberg S.L."/>
            <person name="White O."/>
            <person name="Venter J.C."/>
            <person name="Fraser C.M."/>
            <person name="Kaneko T."/>
            <person name="Nakamura Y."/>
            <person name="Sato S."/>
            <person name="Kato T."/>
            <person name="Asamizu E."/>
            <person name="Sasamoto S."/>
            <person name="Kimura T."/>
            <person name="Idesawa K."/>
            <person name="Kawashima K."/>
            <person name="Kishida Y."/>
            <person name="Kiyokawa C."/>
            <person name="Kohara M."/>
            <person name="Matsumoto M."/>
            <person name="Matsuno A."/>
            <person name="Muraki A."/>
            <person name="Nakayama S."/>
            <person name="Nakazaki N."/>
            <person name="Shinpo S."/>
            <person name="Takeuchi C."/>
            <person name="Wada T."/>
            <person name="Watanabe A."/>
            <person name="Yamada M."/>
            <person name="Yasuda M."/>
            <person name="Tabata S."/>
        </authorList>
    </citation>
    <scope>NUCLEOTIDE SEQUENCE [LARGE SCALE GENOMIC DNA]</scope>
    <source>
        <strain>cv. Columbia</strain>
    </source>
</reference>
<reference key="3">
    <citation type="journal article" date="2017" name="Plant J.">
        <title>Araport11: a complete reannotation of the Arabidopsis thaliana reference genome.</title>
        <authorList>
            <person name="Cheng C.Y."/>
            <person name="Krishnakumar V."/>
            <person name="Chan A.P."/>
            <person name="Thibaud-Nissen F."/>
            <person name="Schobel S."/>
            <person name="Town C.D."/>
        </authorList>
    </citation>
    <scope>GENOME REANNOTATION</scope>
    <source>
        <strain>cv. Columbia</strain>
    </source>
</reference>
<reference key="4">
    <citation type="journal article" date="2003" name="Science">
        <title>Empirical analysis of transcriptional activity in the Arabidopsis genome.</title>
        <authorList>
            <person name="Yamada K."/>
            <person name="Lim J."/>
            <person name="Dale J.M."/>
            <person name="Chen H."/>
            <person name="Shinn P."/>
            <person name="Palm C.J."/>
            <person name="Southwick A.M."/>
            <person name="Wu H.C."/>
            <person name="Kim C.J."/>
            <person name="Nguyen M."/>
            <person name="Pham P.K."/>
            <person name="Cheuk R.F."/>
            <person name="Karlin-Newmann G."/>
            <person name="Liu S.X."/>
            <person name="Lam B."/>
            <person name="Sakano H."/>
            <person name="Wu T."/>
            <person name="Yu G."/>
            <person name="Miranda M."/>
            <person name="Quach H.L."/>
            <person name="Tripp M."/>
            <person name="Chang C.H."/>
            <person name="Lee J.M."/>
            <person name="Toriumi M.J."/>
            <person name="Chan M.M."/>
            <person name="Tang C.C."/>
            <person name="Onodera C.S."/>
            <person name="Deng J.M."/>
            <person name="Akiyama K."/>
            <person name="Ansari Y."/>
            <person name="Arakawa T."/>
            <person name="Banh J."/>
            <person name="Banno F."/>
            <person name="Bowser L."/>
            <person name="Brooks S.Y."/>
            <person name="Carninci P."/>
            <person name="Chao Q."/>
            <person name="Choy N."/>
            <person name="Enju A."/>
            <person name="Goldsmith A.D."/>
            <person name="Gurjal M."/>
            <person name="Hansen N.F."/>
            <person name="Hayashizaki Y."/>
            <person name="Johnson-Hopson C."/>
            <person name="Hsuan V.W."/>
            <person name="Iida K."/>
            <person name="Karnes M."/>
            <person name="Khan S."/>
            <person name="Koesema E."/>
            <person name="Ishida J."/>
            <person name="Jiang P.X."/>
            <person name="Jones T."/>
            <person name="Kawai J."/>
            <person name="Kamiya A."/>
            <person name="Meyers C."/>
            <person name="Nakajima M."/>
            <person name="Narusaka M."/>
            <person name="Seki M."/>
            <person name="Sakurai T."/>
            <person name="Satou M."/>
            <person name="Tamse R."/>
            <person name="Vaysberg M."/>
            <person name="Wallender E.K."/>
            <person name="Wong C."/>
            <person name="Yamamura Y."/>
            <person name="Yuan S."/>
            <person name="Shinozaki K."/>
            <person name="Davis R.W."/>
            <person name="Theologis A."/>
            <person name="Ecker J.R."/>
        </authorList>
    </citation>
    <scope>NUCLEOTIDE SEQUENCE [LARGE SCALE MRNA]</scope>
    <source>
        <strain>cv. Columbia</strain>
    </source>
</reference>
<reference key="5">
    <citation type="journal article" date="2000" name="Gene">
        <title>Genomic and functional characterization of the oas gene family encoding O-acetylserine (thiol) lyases, enzymes catalyzing the final step in cysteine biosynthesis in Arabidopsis thaliana.</title>
        <authorList>
            <person name="Jost R."/>
            <person name="Berkowitz O."/>
            <person name="Wirtz M."/>
            <person name="Hopkins L."/>
            <person name="Hawkesford M.J."/>
            <person name="Hell R."/>
        </authorList>
    </citation>
    <scope>NUCLEOTIDE SEQUENCE [MRNA] OF 43-430</scope>
    <scope>CATALYTIC ACTIVITY</scope>
    <scope>BIOPHYSICOCHEMICAL PROPERTIES</scope>
    <scope>INTERACTION WITH SAT3</scope>
    <source>
        <strain>cv. Columbia</strain>
    </source>
</reference>
<reference key="6">
    <citation type="journal article" date="2000" name="Plant Physiol.">
        <title>beta-Cyanoalanine synthase is a mitochondrial cysteine synthase-like protein in spinach and Arabidopsis.</title>
        <authorList>
            <person name="Hatzfeld Y."/>
            <person name="Maruyama A."/>
            <person name="Schmidt A."/>
            <person name="Noji M."/>
            <person name="Ishizawa K."/>
            <person name="Saito K."/>
        </authorList>
    </citation>
    <scope>NOMENCLATURE</scope>
</reference>
<reference key="7">
    <citation type="journal article" date="2004" name="J. Exp. Bot.">
        <title>O-acetylserine (thiol) lyase: an enigmatic enzyme of plant cysteine biosynthesis revisited in Arabidopsis thaliana.</title>
        <authorList>
            <person name="Wirtz M."/>
            <person name="Droux M."/>
            <person name="Hell R."/>
        </authorList>
    </citation>
    <scope>CATALYTIC ACTIVITY</scope>
    <scope>BIOPHYSICOCHEMICAL PROPERTIES</scope>
</reference>
<reference key="8">
    <citation type="journal article" date="2004" name="Plant Cell">
        <title>Experimental analysis of the Arabidopsis mitochondrial proteome highlights signaling and regulatory components, provides assessment of targeting prediction programs, and indicates plant-specific mitochondrial proteins.</title>
        <authorList>
            <person name="Heazlewood J.L."/>
            <person name="Tonti-Filippini J.S."/>
            <person name="Gout A.M."/>
            <person name="Day D.A."/>
            <person name="Whelan J."/>
            <person name="Millar A.H."/>
        </authorList>
    </citation>
    <scope>IDENTIFICATION BY MASS SPECTROMETRY</scope>
    <scope>SUBCELLULAR LOCATION [LARGE SCALE ANALYSIS]</scope>
    <source>
        <strain>cv. Landsberg erecta</strain>
    </source>
</reference>
<reference key="9">
    <citation type="journal article" date="2005" name="Photosyn. Res.">
        <title>Synthesis of the sulfur amino acids: cysteine and methionine.</title>
        <authorList>
            <person name="Wirtz M."/>
            <person name="Droux M."/>
        </authorList>
    </citation>
    <scope>REVIEW</scope>
</reference>
<reference key="10">
    <citation type="journal article" date="2008" name="Plant Cell">
        <title>Analysis of the Arabidopsis O-acetylserine(thiol)lyase gene family demonstrates compartment-specific differences in the regulation of cysteine synthesis.</title>
        <authorList>
            <person name="Heeg C."/>
            <person name="Kruse C."/>
            <person name="Jost R."/>
            <person name="Gutensohn M."/>
            <person name="Ruppert T."/>
            <person name="Wirtz M."/>
            <person name="Hell R."/>
        </authorList>
    </citation>
    <scope>FUNCTION</scope>
    <scope>DISRUPTION PHENOTYPE</scope>
    <scope>IDENTIFICATION BY MASS SPECTROMETRY</scope>
</reference>
<reference key="11">
    <citation type="journal article" date="2008" name="Plant Physiol.">
        <title>Physiological roles of the beta-substituted alanine synthase gene family in Arabidopsis.</title>
        <authorList>
            <person name="Watanabe M."/>
            <person name="Kusano M."/>
            <person name="Oikawa A."/>
            <person name="Fukushima A."/>
            <person name="Noji M."/>
            <person name="Saito K."/>
        </authorList>
    </citation>
    <scope>GENE FAMILY</scope>
    <scope>FUNCTION</scope>
    <scope>DISRUPTION PHENOTYPE</scope>
</reference>
<reference key="12">
    <citation type="journal article" date="2009" name="J. Mol. Biol.">
        <title>A mechanistic model of the cysteine synthase complex.</title>
        <authorList>
            <person name="Feldman-Salit A."/>
            <person name="Wirtz M."/>
            <person name="Hell R."/>
            <person name="Wade R.C."/>
        </authorList>
    </citation>
    <scope>COMPONENT OF THE CYSTEINE SYNTHASE COMPLEX</scope>
</reference>
<reference key="13">
    <citation type="journal article" date="2010" name="Amino Acids">
        <title>Enzymes of cysteine synthesis show extensive and conserved modifications patterns that include N(alpha)-terminal acetylation.</title>
        <authorList>
            <person name="Wirtz M."/>
            <person name="Heeg C."/>
            <person name="Samami A.A."/>
            <person name="Ruppert T."/>
            <person name="Hell R."/>
        </authorList>
    </citation>
    <scope>IDENTIFICATION BY MASS SPECTROMETRY</scope>
</reference>
<reference key="14">
    <citation type="journal article" date="2010" name="J. Biol. Chem.">
        <title>Structure and function of the hetero-oligomeric cysteine synthase complex in plants.</title>
        <authorList>
            <person name="Wirtz M."/>
            <person name="Birke H."/>
            <person name="Heeg C."/>
            <person name="Mueller C."/>
            <person name="Hosp F."/>
            <person name="Throm C."/>
            <person name="Koenig S."/>
            <person name="Feldman-Salit A."/>
            <person name="Rippe K."/>
            <person name="Petersen G."/>
            <person name="Wade R.C."/>
            <person name="Rybin V."/>
            <person name="Scheffzek K."/>
            <person name="Hell R."/>
        </authorList>
    </citation>
    <scope>COMPONENT OF THE CYSTEINE SYNTHASE COMPLEX</scope>
</reference>
<reference key="15">
    <citation type="journal article" date="2012" name="J. Biol. Chem.">
        <title>Mitochondrial cysteine synthase complex regulates O-acetylserine biosynthesis in plants.</title>
        <authorList>
            <person name="Wirtz M."/>
            <person name="Beard K.F."/>
            <person name="Lee C.P."/>
            <person name="Boltz A."/>
            <person name="Schwarzlaender M."/>
            <person name="Fuchs C."/>
            <person name="Meyer A.J."/>
            <person name="Heeg C."/>
            <person name="Sweetlove L.J."/>
            <person name="Ratcliffe R.G."/>
            <person name="Hell R."/>
        </authorList>
    </citation>
    <scope>INTERACTION WITH SAT3</scope>
    <scope>COMPONENT OF THE CYSTEINE SYNTHASE COMPLEX</scope>
</reference>
<reference key="16">
    <citation type="journal article" date="2012" name="Mol. Plant">
        <title>Mitochondrial sulfide detoxification requires a functional isoform O-acetylserine(thiol)lyase C in Arabidopsis thaliana.</title>
        <authorList>
            <person name="Alvarez C."/>
            <person name="Garcia I."/>
            <person name="Romero L.C."/>
            <person name="Gotor C."/>
        </authorList>
    </citation>
    <scope>FUNCTION</scope>
    <scope>DISRUPTION PHENOTYPE</scope>
</reference>
<reference key="17">
    <citation type="journal article" date="2013" name="Plant Sci.">
        <title>Direct targeting of Arabidopsis cysteine synthase complexes with synthetic polypeptides to selectively deregulate cysteine synthesis.</title>
        <authorList>
            <person name="Wawrzynska A."/>
            <person name="Kurzyk A."/>
            <person name="Mierzwinska M."/>
            <person name="Plochocka D."/>
            <person name="Wieczorek G."/>
            <person name="Sirko A."/>
        </authorList>
    </citation>
    <scope>INTERACTION WITH SAT3</scope>
</reference>
<reference key="18">
    <citation type="journal article" date="2015" name="J. Exp. Bot.">
        <title>Identification of cleavage sites and substrate proteins for two mitochondrial intermediate peptidases in Arabidopsis thaliana.</title>
        <authorList>
            <person name="Carrie C."/>
            <person name="Venne A.S."/>
            <person name="Zahedi R.P."/>
            <person name="Soll J."/>
        </authorList>
    </citation>
    <scope>IDENTIFICATION BY MASS SPECTROMETRY</scope>
    <scope>CLEAVAGE OF TRANSIT PEPTIDE AFTER PHE-87</scope>
</reference>
<sequence>MVAMIMASRFNREAKLASQILSTLLGNRSCYTSMAATSSSALLLNPLTSSSSSSTLRRFRCSPEISSLSFSSASDFSLAMKRQSRSFADGSERDPSVVCEAVKRETGPDGLNIADNVSQLIGKTPMVYLNSIAKGCVANIAAKLEIMEPCCSVKDRIGYSMVTDAEQKGFISPGKSVLVEPTSGNTGIGLAFIAASRGYRLILTMPASMSMERRVLLKAFGAELVLTDPAKGMTGAVQKAEEILKNTPDAYMLQQFDNPANPKIHYETTGPEIWDDTKGKVDIFVAGIGTGGTITGVGRFIKEKNPKTQVIGVEPTESDILSGGKPGPHKIQGIGAGFIPKNLDQKIMDEVIAISSEEAIETAKQLALKEGLMVGISSGAAAAAAIKVAKRPENAGKLIAVVFPSFGERYLSTPLFQSIREEVEKMQPEV</sequence>
<proteinExistence type="evidence at protein level"/>
<comment type="function">
    <text evidence="5 6 7">Acts as a cysteine synthase. Plays a role in the sulfide detoxification in mitochondria.</text>
</comment>
<comment type="catalytic activity">
    <reaction evidence="2 4">
        <text>O-acetyl-L-serine + hydrogen sulfide = L-cysteine + acetate</text>
        <dbReference type="Rhea" id="RHEA:14829"/>
        <dbReference type="ChEBI" id="CHEBI:29919"/>
        <dbReference type="ChEBI" id="CHEBI:30089"/>
        <dbReference type="ChEBI" id="CHEBI:35235"/>
        <dbReference type="ChEBI" id="CHEBI:58340"/>
        <dbReference type="EC" id="2.5.1.47"/>
    </reaction>
</comment>
<comment type="cofactor">
    <cofactor>
        <name>pyridoxal 5'-phosphate</name>
        <dbReference type="ChEBI" id="CHEBI:597326"/>
    </cofactor>
</comment>
<comment type="biophysicochemical properties">
    <kinetics>
        <KM evidence="2 4">0.98 mM for O(3)-acetyl-L-serine for the cysteine synthase activity</KM>
        <KM evidence="2 4">0.43 mM for O(3)-acetyl-L-serine for the cysteine synthase activity</KM>
        <KM evidence="2 4">4.7 uM for H(2)S for the cysteine synthase activity</KM>
        <Vmax evidence="2 4">159.0 umol/min/mg enzyme for L-cysteine for the cysteine synthase activity</Vmax>
        <Vmax evidence="2 4">534.0 umol/min/mg enzyme for L-cysteine for the cysteine synthase activity</Vmax>
        <Vmax evidence="2 4">0.33 umol/min/mg enzyme for H(2)S for the L-3-cyanoalanine synthase activity</Vmax>
    </kinetics>
</comment>
<comment type="pathway">
    <text>Amino-acid biosynthesis; L-cysteine biosynthesis; L-cysteine from L-serine: step 2/2.</text>
</comment>
<comment type="subunit">
    <text evidence="1 2 8 9">Homodimer (By similarity). Interacts with SAT3. Component of the cysteine synthase complex (CSC) composed of two OAS-TL dimers and one SAT hexamer.</text>
</comment>
<comment type="interaction">
    <interactant intactId="EBI-1633616">
        <id>Q43725</id>
    </interactant>
    <interactant intactId="EBI-1633616">
        <id>Q43725</id>
        <label>OASC</label>
    </interactant>
    <organismsDiffer>false</organismsDiffer>
    <experiments>3</experiments>
</comment>
<comment type="interaction">
    <interactant intactId="EBI-1633616">
        <id>Q43725</id>
    </interactant>
    <interactant intactId="EBI-1633440">
        <id>Q39218</id>
        <label>SAT3</label>
    </interactant>
    <organismsDiffer>false</organismsDiffer>
    <experiments>6</experiments>
</comment>
<comment type="subcellular location">
    <subcellularLocation>
        <location evidence="3 12">Mitochondrion</location>
    </subcellularLocation>
</comment>
<comment type="alternative products">
    <event type="alternative splicing"/>
    <isoform>
        <id>Q43725-1</id>
        <name>1</name>
        <sequence type="displayed"/>
    </isoform>
    <text>A number of isoforms are produced. According to EST sequences.</text>
</comment>
<comment type="disruption phenotype">
    <text evidence="5 6 7">No visible phenotype but displays lower levels of thiols in roots (PubMed:18024555). Growth retardation (PubMed:18223034). Defects in root hair formation (PubMed:22511607).</text>
</comment>
<comment type="similarity">
    <text evidence="11">Belongs to the cysteine synthase/cystathionine beta-synthase family.</text>
</comment>
<comment type="sequence caution" evidence="11">
    <conflict type="frameshift">
        <sequence resource="EMBL-CDS" id="CAA57498"/>
    </conflict>
</comment>
<comment type="sequence caution" evidence="11">
    <conflict type="erroneous gene model prediction">
        <sequence resource="EMBL-CDS" id="CAB75795"/>
    </conflict>
</comment>
<evidence type="ECO:0000250" key="1"/>
<evidence type="ECO:0000269" key="2">
    <source>
    </source>
</evidence>
<evidence type="ECO:0000269" key="3">
    <source>
    </source>
</evidence>
<evidence type="ECO:0000269" key="4">
    <source>
    </source>
</evidence>
<evidence type="ECO:0000269" key="5">
    <source>
    </source>
</evidence>
<evidence type="ECO:0000269" key="6">
    <source>
    </source>
</evidence>
<evidence type="ECO:0000269" key="7">
    <source>
    </source>
</evidence>
<evidence type="ECO:0000269" key="8">
    <source>
    </source>
</evidence>
<evidence type="ECO:0000269" key="9">
    <source>
    </source>
</evidence>
<evidence type="ECO:0000269" key="10">
    <source>
    </source>
</evidence>
<evidence type="ECO:0000305" key="11"/>
<evidence type="ECO:0000305" key="12">
    <source>
    </source>
</evidence>
<evidence type="ECO:0007829" key="13">
    <source>
        <dbReference type="PDB" id="4AEC"/>
    </source>
</evidence>
<dbReference type="EC" id="2.5.1.47"/>
<dbReference type="EMBL" id="X81973">
    <property type="protein sequence ID" value="CAA57498.1"/>
    <property type="status" value="ALT_FRAME"/>
    <property type="molecule type" value="mRNA"/>
</dbReference>
<dbReference type="EMBL" id="AL138647">
    <property type="protein sequence ID" value="CAB75795.1"/>
    <property type="status" value="ALT_SEQ"/>
    <property type="molecule type" value="Genomic_DNA"/>
</dbReference>
<dbReference type="EMBL" id="CP002686">
    <property type="protein sequence ID" value="AEE79963.1"/>
    <property type="molecule type" value="Genomic_DNA"/>
</dbReference>
<dbReference type="EMBL" id="AY099721">
    <property type="protein sequence ID" value="AAM20572.1"/>
    <property type="molecule type" value="mRNA"/>
</dbReference>
<dbReference type="EMBL" id="AY128885">
    <property type="protein sequence ID" value="AAM91285.1"/>
    <property type="molecule type" value="mRNA"/>
</dbReference>
<dbReference type="EMBL" id="AJ271727">
    <property type="protein sequence ID" value="CAB71290.1"/>
    <property type="molecule type" value="mRNA"/>
</dbReference>
<dbReference type="PIR" id="T47800">
    <property type="entry name" value="T47800"/>
</dbReference>
<dbReference type="PIR" id="T52650">
    <property type="entry name" value="T52650"/>
</dbReference>
<dbReference type="RefSeq" id="NP_191535.2">
    <molecule id="Q43725-1"/>
    <property type="nucleotide sequence ID" value="NM_115838.6"/>
</dbReference>
<dbReference type="PDB" id="4AEC">
    <property type="method" value="X-ray"/>
    <property type="resolution" value="2.40 A"/>
    <property type="chains" value="A/B=1-430"/>
</dbReference>
<dbReference type="PDBsum" id="4AEC"/>
<dbReference type="SMR" id="Q43725"/>
<dbReference type="BioGRID" id="10459">
    <property type="interactions" value="6"/>
</dbReference>
<dbReference type="DIP" id="DIP-40500N"/>
<dbReference type="FunCoup" id="Q43725">
    <property type="interactions" value="1917"/>
</dbReference>
<dbReference type="IntAct" id="Q43725">
    <property type="interactions" value="4"/>
</dbReference>
<dbReference type="STRING" id="3702.Q43725"/>
<dbReference type="GlyGen" id="Q43725">
    <property type="glycosylation" value="2 sites"/>
</dbReference>
<dbReference type="iPTMnet" id="Q43725"/>
<dbReference type="SwissPalm" id="Q43725"/>
<dbReference type="PaxDb" id="3702-AT3G59760.1"/>
<dbReference type="ProteomicsDB" id="222774">
    <molecule id="Q43725-1"/>
</dbReference>
<dbReference type="EnsemblPlants" id="AT3G59760.3">
    <molecule id="Q43725-1"/>
    <property type="protein sequence ID" value="AT3G59760.3"/>
    <property type="gene ID" value="AT3G59760"/>
</dbReference>
<dbReference type="GeneID" id="825145"/>
<dbReference type="Gramene" id="AT3G59760.3">
    <molecule id="Q43725-1"/>
    <property type="protein sequence ID" value="AT3G59760.3"/>
    <property type="gene ID" value="AT3G59760"/>
</dbReference>
<dbReference type="KEGG" id="ath:AT3G59760"/>
<dbReference type="Araport" id="AT3G59760"/>
<dbReference type="TAIR" id="AT3G59760">
    <property type="gene designation" value="OASC"/>
</dbReference>
<dbReference type="eggNOG" id="KOG1252">
    <property type="taxonomic scope" value="Eukaryota"/>
</dbReference>
<dbReference type="HOGENOM" id="CLU_021018_1_1_1"/>
<dbReference type="InParanoid" id="Q43725"/>
<dbReference type="OMA" id="VVTVFWD"/>
<dbReference type="PhylomeDB" id="Q43725"/>
<dbReference type="BioCyc" id="MetaCyc:AT3G59760-MONOMER"/>
<dbReference type="BRENDA" id="2.5.1.47">
    <property type="organism ID" value="399"/>
</dbReference>
<dbReference type="UniPathway" id="UPA00136">
    <property type="reaction ID" value="UER00200"/>
</dbReference>
<dbReference type="EvolutionaryTrace" id="Q43725"/>
<dbReference type="PRO" id="PR:Q43725"/>
<dbReference type="Proteomes" id="UP000006548">
    <property type="component" value="Chromosome 3"/>
</dbReference>
<dbReference type="ExpressionAtlas" id="Q43725">
    <property type="expression patterns" value="baseline and differential"/>
</dbReference>
<dbReference type="GO" id="GO:0005739">
    <property type="term" value="C:mitochondrion"/>
    <property type="evidence" value="ECO:0007669"/>
    <property type="project" value="UniProtKB-SubCell"/>
</dbReference>
<dbReference type="GO" id="GO:0004124">
    <property type="term" value="F:cysteine synthase activity"/>
    <property type="evidence" value="ECO:0007669"/>
    <property type="project" value="UniProtKB-EC"/>
</dbReference>
<dbReference type="GO" id="GO:0042802">
    <property type="term" value="F:identical protein binding"/>
    <property type="evidence" value="ECO:0000353"/>
    <property type="project" value="IntAct"/>
</dbReference>
<dbReference type="GO" id="GO:0006535">
    <property type="term" value="P:cysteine biosynthetic process from serine"/>
    <property type="evidence" value="ECO:0007669"/>
    <property type="project" value="InterPro"/>
</dbReference>
<dbReference type="CDD" id="cd01561">
    <property type="entry name" value="CBS_like"/>
    <property type="match status" value="1"/>
</dbReference>
<dbReference type="FunFam" id="3.40.50.1100:FF:000006">
    <property type="entry name" value="Cysteine synthase"/>
    <property type="match status" value="1"/>
</dbReference>
<dbReference type="FunFam" id="3.40.50.1100:FF:000130">
    <property type="entry name" value="Cysteine synthase"/>
    <property type="match status" value="1"/>
</dbReference>
<dbReference type="Gene3D" id="3.40.50.1100">
    <property type="match status" value="2"/>
</dbReference>
<dbReference type="InterPro" id="IPR005856">
    <property type="entry name" value="Cys_synth"/>
</dbReference>
<dbReference type="InterPro" id="IPR050214">
    <property type="entry name" value="Cys_Synth/Cystath_Beta-Synth"/>
</dbReference>
<dbReference type="InterPro" id="IPR005859">
    <property type="entry name" value="CysK"/>
</dbReference>
<dbReference type="InterPro" id="IPR001216">
    <property type="entry name" value="P-phosphate_BS"/>
</dbReference>
<dbReference type="InterPro" id="IPR001926">
    <property type="entry name" value="TrpB-like_PALP"/>
</dbReference>
<dbReference type="InterPro" id="IPR036052">
    <property type="entry name" value="TrpB-like_PALP_sf"/>
</dbReference>
<dbReference type="NCBIfam" id="TIGR01139">
    <property type="entry name" value="cysK"/>
    <property type="match status" value="1"/>
</dbReference>
<dbReference type="NCBIfam" id="TIGR01136">
    <property type="entry name" value="cysKM"/>
    <property type="match status" value="1"/>
</dbReference>
<dbReference type="PANTHER" id="PTHR10314">
    <property type="entry name" value="CYSTATHIONINE BETA-SYNTHASE"/>
    <property type="match status" value="1"/>
</dbReference>
<dbReference type="Pfam" id="PF00291">
    <property type="entry name" value="PALP"/>
    <property type="match status" value="1"/>
</dbReference>
<dbReference type="SUPFAM" id="SSF53686">
    <property type="entry name" value="Tryptophan synthase beta subunit-like PLP-dependent enzymes"/>
    <property type="match status" value="1"/>
</dbReference>
<dbReference type="PROSITE" id="PS00901">
    <property type="entry name" value="CYS_SYNTHASE"/>
    <property type="match status" value="1"/>
</dbReference>
<gene>
    <name type="primary">OASC</name>
    <name type="synonym">ACS 1</name>
    <name type="ordered locus">At3g59760</name>
    <name type="ORF">F24G16.30</name>
</gene>
<keyword id="KW-0002">3D-structure</keyword>
<keyword id="KW-0025">Alternative splicing</keyword>
<keyword id="KW-0028">Amino-acid biosynthesis</keyword>
<keyword id="KW-0198">Cysteine biosynthesis</keyword>
<keyword id="KW-0496">Mitochondrion</keyword>
<keyword id="KW-0663">Pyridoxal phosphate</keyword>
<keyword id="KW-1185">Reference proteome</keyword>
<keyword id="KW-0808">Transferase</keyword>
<keyword id="KW-0809">Transit peptide</keyword>
<protein>
    <recommendedName>
        <fullName>Cysteine synthase, mitochondrial</fullName>
        <ecNumber>2.5.1.47</ecNumber>
    </recommendedName>
    <alternativeName>
        <fullName>Beta-substituted Ala synthase 2;2</fullName>
        <shortName>ARAth-Bsas2;2</shortName>
    </alternativeName>
    <alternativeName>
        <fullName>CSase C</fullName>
        <shortName>AtCS-C</shortName>
        <shortName>CS-C</shortName>
    </alternativeName>
    <alternativeName>
        <fullName>O-acetylserine (thiol)-lyase</fullName>
    </alternativeName>
    <alternativeName>
        <fullName>O-acetylserine sulfhydrylase</fullName>
    </alternativeName>
    <alternativeName>
        <fullName>OAS-TL C</fullName>
    </alternativeName>
</protein>
<organism>
    <name type="scientific">Arabidopsis thaliana</name>
    <name type="common">Mouse-ear cress</name>
    <dbReference type="NCBI Taxonomy" id="3702"/>
    <lineage>
        <taxon>Eukaryota</taxon>
        <taxon>Viridiplantae</taxon>
        <taxon>Streptophyta</taxon>
        <taxon>Embryophyta</taxon>
        <taxon>Tracheophyta</taxon>
        <taxon>Spermatophyta</taxon>
        <taxon>Magnoliopsida</taxon>
        <taxon>eudicotyledons</taxon>
        <taxon>Gunneridae</taxon>
        <taxon>Pentapetalae</taxon>
        <taxon>rosids</taxon>
        <taxon>malvids</taxon>
        <taxon>Brassicales</taxon>
        <taxon>Brassicaceae</taxon>
        <taxon>Camelineae</taxon>
        <taxon>Arabidopsis</taxon>
    </lineage>
</organism>
<feature type="transit peptide" description="Mitochondrion" evidence="10">
    <location>
        <begin position="1"/>
        <end position="87"/>
    </location>
</feature>
<feature type="chain" id="PRO_0000006353" description="Cysteine synthase, mitochondrial">
    <location>
        <begin position="88"/>
        <end position="430"/>
    </location>
</feature>
<feature type="binding site" evidence="1">
    <location>
        <position position="185"/>
    </location>
    <ligand>
        <name>pyridoxal 5'-phosphate</name>
        <dbReference type="ChEBI" id="CHEBI:597326"/>
    </ligand>
</feature>
<feature type="binding site" evidence="1">
    <location>
        <begin position="289"/>
        <end position="293"/>
    </location>
    <ligand>
        <name>pyridoxal 5'-phosphate</name>
        <dbReference type="ChEBI" id="CHEBI:597326"/>
    </ligand>
</feature>
<feature type="binding site" evidence="1">
    <location>
        <position position="377"/>
    </location>
    <ligand>
        <name>pyridoxal 5'-phosphate</name>
        <dbReference type="ChEBI" id="CHEBI:597326"/>
    </ligand>
</feature>
<feature type="modified residue" description="N6-(pyridoxal phosphate)lysine" evidence="1">
    <location>
        <position position="154"/>
    </location>
</feature>
<feature type="sequence conflict" description="In Ref. 1; CAA57498 and 5; CAB71290." evidence="11" ref="1 5">
    <location>
        <position position="49"/>
    </location>
</feature>
<feature type="sequence conflict" description="In Ref. 1; CAA57498." evidence="11" ref="1">
    <original>A</original>
    <variation>G</variation>
    <location>
        <position position="73"/>
    </location>
</feature>
<feature type="sequence conflict" description="In Ref. 1; CAA57498." evidence="11" ref="1">
    <location>
        <position position="195"/>
    </location>
</feature>
<feature type="sequence conflict" description="In Ref. 1; CAA57498." evidence="11" ref="1">
    <original>E</original>
    <variation>R</variation>
    <location>
        <position position="314"/>
    </location>
</feature>
<feature type="sequence conflict" description="In Ref. 1; CAA57498." evidence="11" ref="1">
    <original>SE</original>
    <variation>ISKL</variation>
    <location>
        <begin position="356"/>
        <end position="357"/>
    </location>
</feature>
<feature type="sequence conflict" description="In Ref. 1; CAA57498." evidence="11" ref="1">
    <location>
        <position position="385"/>
    </location>
</feature>
<feature type="sequence conflict" description="In Ref. 1; CAA57498." evidence="11" ref="1">
    <location>
        <position position="409"/>
    </location>
</feature>
<feature type="strand" evidence="13">
    <location>
        <begin position="114"/>
        <end position="116"/>
    </location>
</feature>
<feature type="helix" evidence="13">
    <location>
        <begin position="117"/>
        <end position="120"/>
    </location>
</feature>
<feature type="strand" evidence="13">
    <location>
        <begin position="126"/>
        <end position="128"/>
    </location>
</feature>
<feature type="helix" evidence="13">
    <location>
        <begin position="131"/>
        <end position="133"/>
    </location>
</feature>
<feature type="strand" evidence="13">
    <location>
        <begin position="137"/>
        <end position="144"/>
    </location>
</feature>
<feature type="helix" evidence="13">
    <location>
        <begin position="145"/>
        <end position="147"/>
    </location>
</feature>
<feature type="helix" evidence="13">
    <location>
        <begin position="155"/>
        <end position="167"/>
    </location>
</feature>
<feature type="turn" evidence="13">
    <location>
        <begin position="173"/>
        <end position="175"/>
    </location>
</feature>
<feature type="strand" evidence="13">
    <location>
        <begin position="177"/>
        <end position="181"/>
    </location>
</feature>
<feature type="helix" evidence="13">
    <location>
        <begin position="185"/>
        <end position="197"/>
    </location>
</feature>
<feature type="strand" evidence="13">
    <location>
        <begin position="200"/>
        <end position="206"/>
    </location>
</feature>
<feature type="helix" evidence="13">
    <location>
        <begin position="211"/>
        <end position="219"/>
    </location>
</feature>
<feature type="strand" evidence="13">
    <location>
        <begin position="223"/>
        <end position="227"/>
    </location>
</feature>
<feature type="helix" evidence="13">
    <location>
        <begin position="229"/>
        <end position="231"/>
    </location>
</feature>
<feature type="helix" evidence="13">
    <location>
        <begin position="232"/>
        <end position="246"/>
    </location>
</feature>
<feature type="strand" evidence="13">
    <location>
        <begin position="250"/>
        <end position="252"/>
    </location>
</feature>
<feature type="turn" evidence="13">
    <location>
        <begin position="255"/>
        <end position="257"/>
    </location>
</feature>
<feature type="helix" evidence="13">
    <location>
        <begin position="260"/>
        <end position="267"/>
    </location>
</feature>
<feature type="helix" evidence="13">
    <location>
        <begin position="269"/>
        <end position="276"/>
    </location>
</feature>
<feature type="strand" evidence="13">
    <location>
        <begin position="281"/>
        <end position="287"/>
    </location>
</feature>
<feature type="strand" evidence="13">
    <location>
        <begin position="289"/>
        <end position="291"/>
    </location>
</feature>
<feature type="helix" evidence="13">
    <location>
        <begin position="292"/>
        <end position="304"/>
    </location>
</feature>
<feature type="strand" evidence="13">
    <location>
        <begin position="308"/>
        <end position="315"/>
    </location>
</feature>
<feature type="helix" evidence="13">
    <location>
        <begin position="316"/>
        <end position="318"/>
    </location>
</feature>
<feature type="helix" evidence="13">
    <location>
        <begin position="320"/>
        <end position="322"/>
    </location>
</feature>
<feature type="turn" evidence="13">
    <location>
        <begin position="345"/>
        <end position="347"/>
    </location>
</feature>
<feature type="strand" evidence="13">
    <location>
        <begin position="349"/>
        <end position="354"/>
    </location>
</feature>
<feature type="helix" evidence="13">
    <location>
        <begin position="356"/>
        <end position="370"/>
    </location>
</feature>
<feature type="helix" evidence="13">
    <location>
        <begin position="376"/>
        <end position="388"/>
    </location>
</feature>
<feature type="helix" evidence="13">
    <location>
        <begin position="392"/>
        <end position="394"/>
    </location>
</feature>
<feature type="strand" evidence="13">
    <location>
        <begin position="398"/>
        <end position="403"/>
    </location>
</feature>
<feature type="helix" evidence="13">
    <location>
        <begin position="407"/>
        <end position="410"/>
    </location>
</feature>
<feature type="helix" evidence="13">
    <location>
        <begin position="414"/>
        <end position="422"/>
    </location>
</feature>
<accession>Q43725</accession>
<accession>Q8L4A2</accession>
<accession>Q9M1Z8</accession>
<accession>Q9M440</accession>